<comment type="function">
    <text evidence="1">Catalyzes the condensation of iminoaspartate with dihydroxyacetone phosphate to form quinolinate.</text>
</comment>
<comment type="catalytic activity">
    <reaction evidence="1">
        <text>iminosuccinate + dihydroxyacetone phosphate = quinolinate + phosphate + 2 H2O + H(+)</text>
        <dbReference type="Rhea" id="RHEA:25888"/>
        <dbReference type="ChEBI" id="CHEBI:15377"/>
        <dbReference type="ChEBI" id="CHEBI:15378"/>
        <dbReference type="ChEBI" id="CHEBI:29959"/>
        <dbReference type="ChEBI" id="CHEBI:43474"/>
        <dbReference type="ChEBI" id="CHEBI:57642"/>
        <dbReference type="ChEBI" id="CHEBI:77875"/>
        <dbReference type="EC" id="2.5.1.72"/>
    </reaction>
    <physiologicalReaction direction="left-to-right" evidence="1">
        <dbReference type="Rhea" id="RHEA:25889"/>
    </physiologicalReaction>
</comment>
<comment type="cofactor">
    <cofactor evidence="1">
        <name>[4Fe-4S] cluster</name>
        <dbReference type="ChEBI" id="CHEBI:49883"/>
    </cofactor>
    <text evidence="1">Binds 1 [4Fe-4S] cluster per subunit.</text>
</comment>
<comment type="pathway">
    <text evidence="1">Cofactor biosynthesis; NAD(+) biosynthesis; quinolinate from iminoaspartate: step 1/1.</text>
</comment>
<comment type="subcellular location">
    <subcellularLocation>
        <location evidence="1">Cytoplasm</location>
    </subcellularLocation>
</comment>
<comment type="similarity">
    <text evidence="1">Belongs to the quinolinate synthase family. Type 3 subfamily.</text>
</comment>
<protein>
    <recommendedName>
        <fullName evidence="1">Quinolinate synthase</fullName>
        <ecNumber evidence="1">2.5.1.72</ecNumber>
    </recommendedName>
</protein>
<name>NADA_GEOSW</name>
<gene>
    <name evidence="1" type="primary">nadA</name>
    <name type="ordered locus">GWCH70_2529</name>
</gene>
<reference key="1">
    <citation type="submission" date="2009-06" db="EMBL/GenBank/DDBJ databases">
        <title>Complete sequence of chromosome of Geopacillus sp. WCH70.</title>
        <authorList>
            <consortium name="US DOE Joint Genome Institute"/>
            <person name="Lucas S."/>
            <person name="Copeland A."/>
            <person name="Lapidus A."/>
            <person name="Glavina del Rio T."/>
            <person name="Dalin E."/>
            <person name="Tice H."/>
            <person name="Bruce D."/>
            <person name="Goodwin L."/>
            <person name="Pitluck S."/>
            <person name="Chertkov O."/>
            <person name="Brettin T."/>
            <person name="Detter J.C."/>
            <person name="Han C."/>
            <person name="Larimer F."/>
            <person name="Land M."/>
            <person name="Hauser L."/>
            <person name="Kyrpides N."/>
            <person name="Mikhailova N."/>
            <person name="Brumm P."/>
            <person name="Mead D.A."/>
            <person name="Richardson P."/>
        </authorList>
    </citation>
    <scope>NUCLEOTIDE SEQUENCE [LARGE SCALE GENOMIC DNA]</scope>
    <source>
        <strain>WCH70</strain>
    </source>
</reference>
<accession>C5D5F6</accession>
<evidence type="ECO:0000255" key="1">
    <source>
        <dbReference type="HAMAP-Rule" id="MF_00569"/>
    </source>
</evidence>
<sequence>MNVLEVMKRLDDMPESYKTMSMEEMEVRVRAIKERFGKRLFIPGHHYQKDEVIQFADATGDSLQLAQVAAQNSEAEYIVFCGVHFMAETADILTGDHQKVILPDMRAGCSMADMADITQVERAWPILQELFGDTILPLTYVNSTAAIKAFVGRRGGATVTSSNAKKMVEWAFTQKERIFFLPDQHLGRNTAYELGISLDEMAVWDPHTDRLEYKGDIKKVKVILWKGHCSVHENFTVRHIEYIRRTKPDMNIIVHPECSWDVVQQADYAGSTKYIIETIRNAPSGSKWAIGTEMNLVNRLMHEHPDKEIISLNPYMCPCLTMNRIDLPHLLWALESLERGEIVNQITVPPLIAKDAAQALARMLALA</sequence>
<proteinExistence type="inferred from homology"/>
<keyword id="KW-0004">4Fe-4S</keyword>
<keyword id="KW-0963">Cytoplasm</keyword>
<keyword id="KW-0408">Iron</keyword>
<keyword id="KW-0411">Iron-sulfur</keyword>
<keyword id="KW-0479">Metal-binding</keyword>
<keyword id="KW-0662">Pyridine nucleotide biosynthesis</keyword>
<keyword id="KW-0808">Transferase</keyword>
<organism>
    <name type="scientific">Geobacillus sp. (strain WCH70)</name>
    <dbReference type="NCBI Taxonomy" id="471223"/>
    <lineage>
        <taxon>Bacteria</taxon>
        <taxon>Bacillati</taxon>
        <taxon>Bacillota</taxon>
        <taxon>Bacilli</taxon>
        <taxon>Bacillales</taxon>
        <taxon>Anoxybacillaceae</taxon>
        <taxon>Geobacillus</taxon>
    </lineage>
</organism>
<feature type="chain" id="PRO_1000212079" description="Quinolinate synthase">
    <location>
        <begin position="1"/>
        <end position="367"/>
    </location>
</feature>
<feature type="binding site" evidence="1">
    <location>
        <position position="45"/>
    </location>
    <ligand>
        <name>iminosuccinate</name>
        <dbReference type="ChEBI" id="CHEBI:77875"/>
    </ligand>
</feature>
<feature type="binding site" evidence="1">
    <location>
        <position position="62"/>
    </location>
    <ligand>
        <name>iminosuccinate</name>
        <dbReference type="ChEBI" id="CHEBI:77875"/>
    </ligand>
</feature>
<feature type="binding site" evidence="1">
    <location>
        <position position="109"/>
    </location>
    <ligand>
        <name>[4Fe-4S] cluster</name>
        <dbReference type="ChEBI" id="CHEBI:49883"/>
    </ligand>
</feature>
<feature type="binding site" evidence="1">
    <location>
        <begin position="140"/>
        <end position="142"/>
    </location>
    <ligand>
        <name>iminosuccinate</name>
        <dbReference type="ChEBI" id="CHEBI:77875"/>
    </ligand>
</feature>
<feature type="binding site" evidence="1">
    <location>
        <position position="161"/>
    </location>
    <ligand>
        <name>iminosuccinate</name>
        <dbReference type="ChEBI" id="CHEBI:77875"/>
    </ligand>
</feature>
<feature type="binding site" evidence="1">
    <location>
        <position position="229"/>
    </location>
    <ligand>
        <name>[4Fe-4S] cluster</name>
        <dbReference type="ChEBI" id="CHEBI:49883"/>
    </ligand>
</feature>
<feature type="binding site" evidence="1">
    <location>
        <begin position="255"/>
        <end position="257"/>
    </location>
    <ligand>
        <name>iminosuccinate</name>
        <dbReference type="ChEBI" id="CHEBI:77875"/>
    </ligand>
</feature>
<feature type="binding site" evidence="1">
    <location>
        <position position="272"/>
    </location>
    <ligand>
        <name>iminosuccinate</name>
        <dbReference type="ChEBI" id="CHEBI:77875"/>
    </ligand>
</feature>
<feature type="binding site" evidence="1">
    <location>
        <position position="319"/>
    </location>
    <ligand>
        <name>[4Fe-4S] cluster</name>
        <dbReference type="ChEBI" id="CHEBI:49883"/>
    </ligand>
</feature>
<dbReference type="EC" id="2.5.1.72" evidence="1"/>
<dbReference type="EMBL" id="CP001638">
    <property type="protein sequence ID" value="ACS25224.1"/>
    <property type="molecule type" value="Genomic_DNA"/>
</dbReference>
<dbReference type="SMR" id="C5D5F6"/>
<dbReference type="STRING" id="471223.GWCH70_2529"/>
<dbReference type="KEGG" id="gwc:GWCH70_2529"/>
<dbReference type="eggNOG" id="COG0379">
    <property type="taxonomic scope" value="Bacteria"/>
</dbReference>
<dbReference type="HOGENOM" id="CLU_047382_2_0_9"/>
<dbReference type="OrthoDB" id="9801204at2"/>
<dbReference type="UniPathway" id="UPA00253">
    <property type="reaction ID" value="UER00327"/>
</dbReference>
<dbReference type="GO" id="GO:0005829">
    <property type="term" value="C:cytosol"/>
    <property type="evidence" value="ECO:0007669"/>
    <property type="project" value="TreeGrafter"/>
</dbReference>
<dbReference type="GO" id="GO:0051539">
    <property type="term" value="F:4 iron, 4 sulfur cluster binding"/>
    <property type="evidence" value="ECO:0007669"/>
    <property type="project" value="UniProtKB-KW"/>
</dbReference>
<dbReference type="GO" id="GO:0046872">
    <property type="term" value="F:metal ion binding"/>
    <property type="evidence" value="ECO:0007669"/>
    <property type="project" value="UniProtKB-KW"/>
</dbReference>
<dbReference type="GO" id="GO:0008987">
    <property type="term" value="F:quinolinate synthetase A activity"/>
    <property type="evidence" value="ECO:0007669"/>
    <property type="project" value="UniProtKB-UniRule"/>
</dbReference>
<dbReference type="GO" id="GO:0034628">
    <property type="term" value="P:'de novo' NAD biosynthetic process from L-aspartate"/>
    <property type="evidence" value="ECO:0007669"/>
    <property type="project" value="TreeGrafter"/>
</dbReference>
<dbReference type="FunFam" id="3.40.50.10800:FF:000001">
    <property type="entry name" value="Quinolinate synthase A"/>
    <property type="match status" value="1"/>
</dbReference>
<dbReference type="Gene3D" id="3.40.50.10800">
    <property type="entry name" value="NadA-like"/>
    <property type="match status" value="3"/>
</dbReference>
<dbReference type="HAMAP" id="MF_00569">
    <property type="entry name" value="NadA_type3"/>
    <property type="match status" value="1"/>
</dbReference>
<dbReference type="InterPro" id="IPR003473">
    <property type="entry name" value="NadA"/>
</dbReference>
<dbReference type="InterPro" id="IPR036094">
    <property type="entry name" value="NadA_sf"/>
</dbReference>
<dbReference type="InterPro" id="IPR023515">
    <property type="entry name" value="Quinolinate_synth_A_type3"/>
</dbReference>
<dbReference type="NCBIfam" id="TIGR00550">
    <property type="entry name" value="nadA"/>
    <property type="match status" value="1"/>
</dbReference>
<dbReference type="NCBIfam" id="NF006880">
    <property type="entry name" value="PRK09375.2-1"/>
    <property type="match status" value="1"/>
</dbReference>
<dbReference type="NCBIfam" id="NF006883">
    <property type="entry name" value="PRK09375.2-4"/>
    <property type="match status" value="1"/>
</dbReference>
<dbReference type="PANTHER" id="PTHR30573:SF0">
    <property type="entry name" value="QUINOLINATE SYNTHASE, CHLOROPLASTIC"/>
    <property type="match status" value="1"/>
</dbReference>
<dbReference type="PANTHER" id="PTHR30573">
    <property type="entry name" value="QUINOLINATE SYNTHETASE A"/>
    <property type="match status" value="1"/>
</dbReference>
<dbReference type="Pfam" id="PF02445">
    <property type="entry name" value="NadA"/>
    <property type="match status" value="1"/>
</dbReference>
<dbReference type="SUPFAM" id="SSF142754">
    <property type="entry name" value="NadA-like"/>
    <property type="match status" value="1"/>
</dbReference>